<protein>
    <recommendedName>
        <fullName>EF-hand calcium-binding domain-containing protein 14</fullName>
    </recommendedName>
</protein>
<organism>
    <name type="scientific">Homo sapiens</name>
    <name type="common">Human</name>
    <dbReference type="NCBI Taxonomy" id="9606"/>
    <lineage>
        <taxon>Eukaryota</taxon>
        <taxon>Metazoa</taxon>
        <taxon>Chordata</taxon>
        <taxon>Craniata</taxon>
        <taxon>Vertebrata</taxon>
        <taxon>Euteleostomi</taxon>
        <taxon>Mammalia</taxon>
        <taxon>Eutheria</taxon>
        <taxon>Euarchontoglires</taxon>
        <taxon>Primates</taxon>
        <taxon>Haplorrhini</taxon>
        <taxon>Catarrhini</taxon>
        <taxon>Hominidae</taxon>
        <taxon>Homo</taxon>
    </lineage>
</organism>
<feature type="chain" id="PRO_0000073882" description="EF-hand calcium-binding domain-containing protein 14">
    <location>
        <begin position="1"/>
        <end position="495"/>
    </location>
</feature>
<feature type="domain" description="EF-hand 1" evidence="1">
    <location>
        <begin position="434"/>
        <end position="463"/>
    </location>
</feature>
<feature type="domain" description="EF-hand 2" evidence="1">
    <location>
        <begin position="464"/>
        <end position="495"/>
    </location>
</feature>
<feature type="region of interest" description="Disordered" evidence="2">
    <location>
        <begin position="1"/>
        <end position="50"/>
    </location>
</feature>
<feature type="region of interest" description="Disordered" evidence="2">
    <location>
        <begin position="381"/>
        <end position="404"/>
    </location>
</feature>
<feature type="compositionally biased region" description="Basic residues" evidence="2">
    <location>
        <begin position="18"/>
        <end position="31"/>
    </location>
</feature>
<feature type="compositionally biased region" description="Acidic residues" evidence="2">
    <location>
        <begin position="37"/>
        <end position="50"/>
    </location>
</feature>
<feature type="binding site" evidence="4">
    <location>
        <position position="477"/>
    </location>
    <ligand>
        <name>Ca(2+)</name>
        <dbReference type="ChEBI" id="CHEBI:29108"/>
    </ligand>
</feature>
<feature type="binding site" evidence="4">
    <location>
        <position position="479"/>
    </location>
    <ligand>
        <name>Ca(2+)</name>
        <dbReference type="ChEBI" id="CHEBI:29108"/>
    </ligand>
</feature>
<feature type="binding site" evidence="4">
    <location>
        <position position="481"/>
    </location>
    <ligand>
        <name>Ca(2+)</name>
        <dbReference type="ChEBI" id="CHEBI:29108"/>
    </ligand>
</feature>
<feature type="binding site" evidence="4">
    <location>
        <position position="483"/>
    </location>
    <ligand>
        <name>Ca(2+)</name>
        <dbReference type="ChEBI" id="CHEBI:29108"/>
    </ligand>
</feature>
<feature type="binding site" evidence="4">
    <location>
        <position position="488"/>
    </location>
    <ligand>
        <name>Ca(2+)</name>
        <dbReference type="ChEBI" id="CHEBI:29108"/>
    </ligand>
</feature>
<feature type="modified residue" description="Phosphoserine" evidence="5">
    <location>
        <position position="17"/>
    </location>
</feature>
<feature type="sequence variant" id="VAR_074176" evidence="3">
    <original>P</original>
    <variation>S</variation>
    <location>
        <position position="239"/>
    </location>
</feature>
<feature type="sequence variant" id="VAR_048669" description="In dbSNP:rs6665021.">
    <original>L</original>
    <variation>P</variation>
    <location>
        <position position="337"/>
    </location>
</feature>
<dbReference type="EMBL" id="AB007963">
    <property type="protein sequence ID" value="BAA32328.2"/>
    <property type="status" value="ALT_INIT"/>
    <property type="molecule type" value="mRNA"/>
</dbReference>
<dbReference type="EMBL" id="AL593856">
    <property type="status" value="NOT_ANNOTATED_CDS"/>
    <property type="molecule type" value="Genomic_DNA"/>
</dbReference>
<dbReference type="EMBL" id="CH471059">
    <property type="protein sequence ID" value="EAX06893.1"/>
    <property type="molecule type" value="Genomic_DNA"/>
</dbReference>
<dbReference type="EMBL" id="CH471059">
    <property type="protein sequence ID" value="EAX06894.1"/>
    <property type="molecule type" value="Genomic_DNA"/>
</dbReference>
<dbReference type="EMBL" id="BC002525">
    <property type="protein sequence ID" value="AAH02525.1"/>
    <property type="molecule type" value="mRNA"/>
</dbReference>
<dbReference type="CCDS" id="CCDS30706.1"/>
<dbReference type="RefSeq" id="NP_055589.1">
    <property type="nucleotide sequence ID" value="NM_014774.3"/>
</dbReference>
<dbReference type="SMR" id="O75071"/>
<dbReference type="BioGRID" id="115152">
    <property type="interactions" value="12"/>
</dbReference>
<dbReference type="FunCoup" id="O75071">
    <property type="interactions" value="1677"/>
</dbReference>
<dbReference type="IntAct" id="O75071">
    <property type="interactions" value="8"/>
</dbReference>
<dbReference type="STRING" id="9606.ENSP00000361001"/>
<dbReference type="CarbonylDB" id="O75071"/>
<dbReference type="GlyConnect" id="1198">
    <property type="glycosylation" value="1 N-Linked glycan (1 site)"/>
</dbReference>
<dbReference type="GlyCosmos" id="O75071">
    <property type="glycosylation" value="1 site, 1 glycan"/>
</dbReference>
<dbReference type="GlyGen" id="O75071">
    <property type="glycosylation" value="9 sites, 9 N-linked glycans (6 sites), 2 O-linked glycans (3 sites)"/>
</dbReference>
<dbReference type="iPTMnet" id="O75071"/>
<dbReference type="PhosphoSitePlus" id="O75071"/>
<dbReference type="SwissPalm" id="O75071"/>
<dbReference type="BioMuta" id="EFCAB14"/>
<dbReference type="jPOST" id="O75071"/>
<dbReference type="MassIVE" id="O75071"/>
<dbReference type="PaxDb" id="9606-ENSP00000361001"/>
<dbReference type="PeptideAtlas" id="O75071"/>
<dbReference type="ProteomicsDB" id="49737"/>
<dbReference type="Antibodypedia" id="2537">
    <property type="antibodies" value="96 antibodies from 22 providers"/>
</dbReference>
<dbReference type="DNASU" id="9813"/>
<dbReference type="Ensembl" id="ENST00000371933.8">
    <property type="protein sequence ID" value="ENSP00000361001.3"/>
    <property type="gene ID" value="ENSG00000159658.15"/>
</dbReference>
<dbReference type="GeneID" id="9813"/>
<dbReference type="KEGG" id="hsa:9813"/>
<dbReference type="MANE-Select" id="ENST00000371933.8">
    <property type="protein sequence ID" value="ENSP00000361001.3"/>
    <property type="RefSeq nucleotide sequence ID" value="NM_014774.3"/>
    <property type="RefSeq protein sequence ID" value="NP_055589.1"/>
</dbReference>
<dbReference type="UCSC" id="uc001cqk.4">
    <property type="organism name" value="human"/>
</dbReference>
<dbReference type="AGR" id="HGNC:29051"/>
<dbReference type="CTD" id="9813"/>
<dbReference type="DisGeNET" id="9813"/>
<dbReference type="GeneCards" id="EFCAB14"/>
<dbReference type="HGNC" id="HGNC:29051">
    <property type="gene designation" value="EFCAB14"/>
</dbReference>
<dbReference type="HPA" id="ENSG00000159658">
    <property type="expression patterns" value="Tissue enhanced (parathyroid)"/>
</dbReference>
<dbReference type="MIM" id="619559">
    <property type="type" value="gene"/>
</dbReference>
<dbReference type="neXtProt" id="NX_O75071"/>
<dbReference type="OpenTargets" id="ENSG00000159658"/>
<dbReference type="PharmGKB" id="PA142671630"/>
<dbReference type="VEuPathDB" id="HostDB:ENSG00000159658"/>
<dbReference type="eggNOG" id="ENOG502QSQB">
    <property type="taxonomic scope" value="Eukaryota"/>
</dbReference>
<dbReference type="GeneTree" id="ENSGT00390000011196"/>
<dbReference type="HOGENOM" id="CLU_043044_0_0_1"/>
<dbReference type="InParanoid" id="O75071"/>
<dbReference type="OMA" id="QSDMNRH"/>
<dbReference type="OrthoDB" id="10009315at2759"/>
<dbReference type="PAN-GO" id="O75071">
    <property type="GO annotations" value="0 GO annotations based on evolutionary models"/>
</dbReference>
<dbReference type="PhylomeDB" id="O75071"/>
<dbReference type="TreeFam" id="TF331353"/>
<dbReference type="PathwayCommons" id="O75071"/>
<dbReference type="SignaLink" id="O75071"/>
<dbReference type="BioGRID-ORCS" id="9813">
    <property type="hits" value="9 hits in 1155 CRISPR screens"/>
</dbReference>
<dbReference type="ChiTaRS" id="EFCAB14">
    <property type="organism name" value="human"/>
</dbReference>
<dbReference type="GenomeRNAi" id="9813"/>
<dbReference type="Pharos" id="O75071">
    <property type="development level" value="Tdark"/>
</dbReference>
<dbReference type="PRO" id="PR:O75071"/>
<dbReference type="Proteomes" id="UP000005640">
    <property type="component" value="Chromosome 1"/>
</dbReference>
<dbReference type="RNAct" id="O75071">
    <property type="molecule type" value="protein"/>
</dbReference>
<dbReference type="Bgee" id="ENSG00000159658">
    <property type="expression patterns" value="Expressed in cardia of stomach and 211 other cell types or tissues"/>
</dbReference>
<dbReference type="ExpressionAtlas" id="O75071">
    <property type="expression patterns" value="baseline and differential"/>
</dbReference>
<dbReference type="GO" id="GO:0005509">
    <property type="term" value="F:calcium ion binding"/>
    <property type="evidence" value="ECO:0007669"/>
    <property type="project" value="InterPro"/>
</dbReference>
<dbReference type="Gene3D" id="1.10.287.1490">
    <property type="match status" value="1"/>
</dbReference>
<dbReference type="Gene3D" id="1.10.238.10">
    <property type="entry name" value="EF-hand"/>
    <property type="match status" value="1"/>
</dbReference>
<dbReference type="InterPro" id="IPR011992">
    <property type="entry name" value="EF-hand-dom_pair"/>
</dbReference>
<dbReference type="InterPro" id="IPR002048">
    <property type="entry name" value="EF_hand_dom"/>
</dbReference>
<dbReference type="InterPro" id="IPR042352">
    <property type="entry name" value="EFCAB14"/>
</dbReference>
<dbReference type="PANTHER" id="PTHR15717:SF2">
    <property type="entry name" value="EF-HAND CALCIUM-BINDING DOMAIN-CONTAINING PROTEIN 14"/>
    <property type="match status" value="1"/>
</dbReference>
<dbReference type="PANTHER" id="PTHR15717">
    <property type="entry name" value="PROTEIN KIAA0494"/>
    <property type="match status" value="1"/>
</dbReference>
<dbReference type="SUPFAM" id="SSF47473">
    <property type="entry name" value="EF-hand"/>
    <property type="match status" value="1"/>
</dbReference>
<dbReference type="PROSITE" id="PS50222">
    <property type="entry name" value="EF_HAND_2"/>
    <property type="match status" value="2"/>
</dbReference>
<comment type="sequence caution" evidence="4">
    <conflict type="erroneous initiation">
        <sequence resource="EMBL-CDS" id="BAA32328"/>
    </conflict>
    <text>Extended N-terminus.</text>
</comment>
<reference key="1">
    <citation type="journal article" date="1997" name="DNA Res.">
        <title>Characterization of cDNA clones in size-fractionated cDNA libraries from human brain.</title>
        <authorList>
            <person name="Seki N."/>
            <person name="Ohira M."/>
            <person name="Nagase T."/>
            <person name="Ishikawa K."/>
            <person name="Miyajima N."/>
            <person name="Nakajima D."/>
            <person name="Nomura N."/>
            <person name="Ohara O."/>
        </authorList>
    </citation>
    <scope>NUCLEOTIDE SEQUENCE [LARGE SCALE MRNA]</scope>
    <source>
        <tissue>Brain</tissue>
    </source>
</reference>
<reference key="2">
    <citation type="journal article" date="2006" name="Nature">
        <title>The DNA sequence and biological annotation of human chromosome 1.</title>
        <authorList>
            <person name="Gregory S.G."/>
            <person name="Barlow K.F."/>
            <person name="McLay K.E."/>
            <person name="Kaul R."/>
            <person name="Swarbreck D."/>
            <person name="Dunham A."/>
            <person name="Scott C.E."/>
            <person name="Howe K.L."/>
            <person name="Woodfine K."/>
            <person name="Spencer C.C.A."/>
            <person name="Jones M.C."/>
            <person name="Gillson C."/>
            <person name="Searle S."/>
            <person name="Zhou Y."/>
            <person name="Kokocinski F."/>
            <person name="McDonald L."/>
            <person name="Evans R."/>
            <person name="Phillips K."/>
            <person name="Atkinson A."/>
            <person name="Cooper R."/>
            <person name="Jones C."/>
            <person name="Hall R.E."/>
            <person name="Andrews T.D."/>
            <person name="Lloyd C."/>
            <person name="Ainscough R."/>
            <person name="Almeida J.P."/>
            <person name="Ambrose K.D."/>
            <person name="Anderson F."/>
            <person name="Andrew R.W."/>
            <person name="Ashwell R.I.S."/>
            <person name="Aubin K."/>
            <person name="Babbage A.K."/>
            <person name="Bagguley C.L."/>
            <person name="Bailey J."/>
            <person name="Beasley H."/>
            <person name="Bethel G."/>
            <person name="Bird C.P."/>
            <person name="Bray-Allen S."/>
            <person name="Brown J.Y."/>
            <person name="Brown A.J."/>
            <person name="Buckley D."/>
            <person name="Burton J."/>
            <person name="Bye J."/>
            <person name="Carder C."/>
            <person name="Chapman J.C."/>
            <person name="Clark S.Y."/>
            <person name="Clarke G."/>
            <person name="Clee C."/>
            <person name="Cobley V."/>
            <person name="Collier R.E."/>
            <person name="Corby N."/>
            <person name="Coville G.J."/>
            <person name="Davies J."/>
            <person name="Deadman R."/>
            <person name="Dunn M."/>
            <person name="Earthrowl M."/>
            <person name="Ellington A.G."/>
            <person name="Errington H."/>
            <person name="Frankish A."/>
            <person name="Frankland J."/>
            <person name="French L."/>
            <person name="Garner P."/>
            <person name="Garnett J."/>
            <person name="Gay L."/>
            <person name="Ghori M.R.J."/>
            <person name="Gibson R."/>
            <person name="Gilby L.M."/>
            <person name="Gillett W."/>
            <person name="Glithero R.J."/>
            <person name="Grafham D.V."/>
            <person name="Griffiths C."/>
            <person name="Griffiths-Jones S."/>
            <person name="Grocock R."/>
            <person name="Hammond S."/>
            <person name="Harrison E.S.I."/>
            <person name="Hart E."/>
            <person name="Haugen E."/>
            <person name="Heath P.D."/>
            <person name="Holmes S."/>
            <person name="Holt K."/>
            <person name="Howden P.J."/>
            <person name="Hunt A.R."/>
            <person name="Hunt S.E."/>
            <person name="Hunter G."/>
            <person name="Isherwood J."/>
            <person name="James R."/>
            <person name="Johnson C."/>
            <person name="Johnson D."/>
            <person name="Joy A."/>
            <person name="Kay M."/>
            <person name="Kershaw J.K."/>
            <person name="Kibukawa M."/>
            <person name="Kimberley A.M."/>
            <person name="King A."/>
            <person name="Knights A.J."/>
            <person name="Lad H."/>
            <person name="Laird G."/>
            <person name="Lawlor S."/>
            <person name="Leongamornlert D.A."/>
            <person name="Lloyd D.M."/>
            <person name="Loveland J."/>
            <person name="Lovell J."/>
            <person name="Lush M.J."/>
            <person name="Lyne R."/>
            <person name="Martin S."/>
            <person name="Mashreghi-Mohammadi M."/>
            <person name="Matthews L."/>
            <person name="Matthews N.S.W."/>
            <person name="McLaren S."/>
            <person name="Milne S."/>
            <person name="Mistry S."/>
            <person name="Moore M.J.F."/>
            <person name="Nickerson T."/>
            <person name="O'Dell C.N."/>
            <person name="Oliver K."/>
            <person name="Palmeiri A."/>
            <person name="Palmer S.A."/>
            <person name="Parker A."/>
            <person name="Patel D."/>
            <person name="Pearce A.V."/>
            <person name="Peck A.I."/>
            <person name="Pelan S."/>
            <person name="Phelps K."/>
            <person name="Phillimore B.J."/>
            <person name="Plumb R."/>
            <person name="Rajan J."/>
            <person name="Raymond C."/>
            <person name="Rouse G."/>
            <person name="Saenphimmachak C."/>
            <person name="Sehra H.K."/>
            <person name="Sheridan E."/>
            <person name="Shownkeen R."/>
            <person name="Sims S."/>
            <person name="Skuce C.D."/>
            <person name="Smith M."/>
            <person name="Steward C."/>
            <person name="Subramanian S."/>
            <person name="Sycamore N."/>
            <person name="Tracey A."/>
            <person name="Tromans A."/>
            <person name="Van Helmond Z."/>
            <person name="Wall M."/>
            <person name="Wallis J.M."/>
            <person name="White S."/>
            <person name="Whitehead S.L."/>
            <person name="Wilkinson J.E."/>
            <person name="Willey D.L."/>
            <person name="Williams H."/>
            <person name="Wilming L."/>
            <person name="Wray P.W."/>
            <person name="Wu Z."/>
            <person name="Coulson A."/>
            <person name="Vaudin M."/>
            <person name="Sulston J.E."/>
            <person name="Durbin R.M."/>
            <person name="Hubbard T."/>
            <person name="Wooster R."/>
            <person name="Dunham I."/>
            <person name="Carter N.P."/>
            <person name="McVean G."/>
            <person name="Ross M.T."/>
            <person name="Harrow J."/>
            <person name="Olson M.V."/>
            <person name="Beck S."/>
            <person name="Rogers J."/>
            <person name="Bentley D.R."/>
        </authorList>
    </citation>
    <scope>NUCLEOTIDE SEQUENCE [LARGE SCALE GENOMIC DNA]</scope>
</reference>
<reference key="3">
    <citation type="submission" date="2005-09" db="EMBL/GenBank/DDBJ databases">
        <authorList>
            <person name="Mural R.J."/>
            <person name="Istrail S."/>
            <person name="Sutton G.G."/>
            <person name="Florea L."/>
            <person name="Halpern A.L."/>
            <person name="Mobarry C.M."/>
            <person name="Lippert R."/>
            <person name="Walenz B."/>
            <person name="Shatkay H."/>
            <person name="Dew I."/>
            <person name="Miller J.R."/>
            <person name="Flanigan M.J."/>
            <person name="Edwards N.J."/>
            <person name="Bolanos R."/>
            <person name="Fasulo D."/>
            <person name="Halldorsson B.V."/>
            <person name="Hannenhalli S."/>
            <person name="Turner R."/>
            <person name="Yooseph S."/>
            <person name="Lu F."/>
            <person name="Nusskern D.R."/>
            <person name="Shue B.C."/>
            <person name="Zheng X.H."/>
            <person name="Zhong F."/>
            <person name="Delcher A.L."/>
            <person name="Huson D.H."/>
            <person name="Kravitz S.A."/>
            <person name="Mouchard L."/>
            <person name="Reinert K."/>
            <person name="Remington K.A."/>
            <person name="Clark A.G."/>
            <person name="Waterman M.S."/>
            <person name="Eichler E.E."/>
            <person name="Adams M.D."/>
            <person name="Hunkapiller M.W."/>
            <person name="Myers E.W."/>
            <person name="Venter J.C."/>
        </authorList>
    </citation>
    <scope>NUCLEOTIDE SEQUENCE [LARGE SCALE GENOMIC DNA]</scope>
</reference>
<reference key="4">
    <citation type="journal article" date="2004" name="Genome Res.">
        <title>The status, quality, and expansion of the NIH full-length cDNA project: the Mammalian Gene Collection (MGC).</title>
        <authorList>
            <consortium name="The MGC Project Team"/>
        </authorList>
    </citation>
    <scope>NUCLEOTIDE SEQUENCE [LARGE SCALE MRNA]</scope>
    <source>
        <tissue>Placenta</tissue>
    </source>
</reference>
<reference key="5">
    <citation type="journal article" date="2013" name="J. Proteome Res.">
        <title>Toward a comprehensive characterization of a human cancer cell phosphoproteome.</title>
        <authorList>
            <person name="Zhou H."/>
            <person name="Di Palma S."/>
            <person name="Preisinger C."/>
            <person name="Peng M."/>
            <person name="Polat A.N."/>
            <person name="Heck A.J."/>
            <person name="Mohammed S."/>
        </authorList>
    </citation>
    <scope>PHOSPHORYLATION [LARGE SCALE ANALYSIS] AT SER-17</scope>
    <scope>IDENTIFICATION BY MASS SPECTROMETRY [LARGE SCALE ANALYSIS]</scope>
    <source>
        <tissue>Erythroleukemia</tissue>
    </source>
</reference>
<reference key="6">
    <citation type="journal article" date="2015" name="Proc. Natl. Acad. Sci. U.S.A.">
        <title>Neomorphic effects of recurrent somatic mutations in Yin Yang 1 in insulin-producing adenomas.</title>
        <authorList>
            <person name="Cromer M.K."/>
            <person name="Choi M."/>
            <person name="Nelson-Williams C."/>
            <person name="Fonseca A.L."/>
            <person name="Kunstman J.W."/>
            <person name="Korah R.M."/>
            <person name="Overton J.D."/>
            <person name="Mane S."/>
            <person name="Kenney B."/>
            <person name="Malchoff C.D."/>
            <person name="Stalberg P."/>
            <person name="Akerstroem G."/>
            <person name="Westin G."/>
            <person name="Hellman P."/>
            <person name="Carling T."/>
            <person name="Bjoerklund P."/>
            <person name="Lifton R.P."/>
        </authorList>
    </citation>
    <scope>VARIANT SER-239</scope>
</reference>
<sequence>MKKRKELNALIGLAGDSRRKKPKKGPSSHRLLRTEPPDSDSESSSEEEEEFGVVGNRSRFAKGDYLRCCKICYPLCGFVILAACVVACVGLVWMQVALKEDLDALKEKFRTMESNQKSSFQEIPKLNEELLSKQKQLEKIESGEMGLNKVWINITEMNKQISLLTSAVNHLKANVKSAADLISLPTTVEGLQKSVASIGNTLNSVHLAVEALQKTVDEHKKTMELLQSDMNQHFLKETPGSNQIIPSPSATSELDNKTHSENLKQDILYLHNSLEEVNSALVGYQRQNDLKLEGMNETVSNLTQRVNLIESDVVAMSKVEKKANLSFSMMGDRSATLKRQSLDQVTNRTDTVKIQSIKKEDSSNSQVSKLREKLQLISALTNKPESNRPPETADEEQVESFTSKPSALPKFSQFLGDPVEKAAQLRPISLPGVSSTEDLQDLFRKTGQDVDGKLTYQEIWTSLGSAMPEPESLRAFDSDGDGRYSFLELRVALGI</sequence>
<proteinExistence type="evidence at protein level"/>
<keyword id="KW-0106">Calcium</keyword>
<keyword id="KW-0479">Metal-binding</keyword>
<keyword id="KW-0597">Phosphoprotein</keyword>
<keyword id="KW-1267">Proteomics identification</keyword>
<keyword id="KW-1185">Reference proteome</keyword>
<keyword id="KW-0677">Repeat</keyword>
<evidence type="ECO:0000255" key="1">
    <source>
        <dbReference type="PROSITE-ProRule" id="PRU00448"/>
    </source>
</evidence>
<evidence type="ECO:0000256" key="2">
    <source>
        <dbReference type="SAM" id="MobiDB-lite"/>
    </source>
</evidence>
<evidence type="ECO:0000269" key="3">
    <source>
    </source>
</evidence>
<evidence type="ECO:0000305" key="4"/>
<evidence type="ECO:0007744" key="5">
    <source>
    </source>
</evidence>
<name>EFC14_HUMAN</name>
<accession>O75071</accession>
<accession>D3DQ23</accession>
<accession>Q5SXB8</accession>
<gene>
    <name type="primary">EFCAB14</name>
    <name type="synonym">KIAA0494</name>
</gene>